<name>RSTR_VIBCL</name>
<gene>
    <name type="primary">rstR</name>
</gene>
<accession>O85264</accession>
<dbReference type="EMBL" id="AF055890">
    <property type="protein sequence ID" value="AAC24223.1"/>
    <property type="molecule type" value="Genomic_DNA"/>
</dbReference>
<dbReference type="EMBL" id="AF220606">
    <property type="protein sequence ID" value="AAF29541.1"/>
    <property type="molecule type" value="Genomic_DNA"/>
</dbReference>
<dbReference type="RefSeq" id="WP_000492997.1">
    <property type="nucleotide sequence ID" value="NZ_WPDA01000039.1"/>
</dbReference>
<dbReference type="SMR" id="O85264"/>
<dbReference type="OMA" id="KNTYLAY"/>
<dbReference type="GO" id="GO:0003677">
    <property type="term" value="F:DNA binding"/>
    <property type="evidence" value="ECO:0007669"/>
    <property type="project" value="UniProtKB-KW"/>
</dbReference>
<dbReference type="CDD" id="cd00093">
    <property type="entry name" value="HTH_XRE"/>
    <property type="match status" value="1"/>
</dbReference>
<dbReference type="Gene3D" id="1.10.260.40">
    <property type="entry name" value="lambda repressor-like DNA-binding domains"/>
    <property type="match status" value="1"/>
</dbReference>
<dbReference type="InterPro" id="IPR001387">
    <property type="entry name" value="Cro/C1-type_HTH"/>
</dbReference>
<dbReference type="InterPro" id="IPR010982">
    <property type="entry name" value="Lambda_DNA-bd_dom_sf"/>
</dbReference>
<dbReference type="PANTHER" id="PTHR46558:SF11">
    <property type="entry name" value="HTH-TYPE TRANSCRIPTIONAL REGULATOR XRE"/>
    <property type="match status" value="1"/>
</dbReference>
<dbReference type="PANTHER" id="PTHR46558">
    <property type="entry name" value="TRACRIPTIONAL REGULATORY PROTEIN-RELATED-RELATED"/>
    <property type="match status" value="1"/>
</dbReference>
<dbReference type="Pfam" id="PF01381">
    <property type="entry name" value="HTH_3"/>
    <property type="match status" value="1"/>
</dbReference>
<dbReference type="SMART" id="SM00530">
    <property type="entry name" value="HTH_XRE"/>
    <property type="match status" value="1"/>
</dbReference>
<dbReference type="SUPFAM" id="SSF47413">
    <property type="entry name" value="lambda repressor-like DNA-binding domains"/>
    <property type="match status" value="1"/>
</dbReference>
<dbReference type="PROSITE" id="PS50943">
    <property type="entry name" value="HTH_CROC1"/>
    <property type="match status" value="1"/>
</dbReference>
<evidence type="ECO:0000255" key="1">
    <source>
        <dbReference type="PROSITE-ProRule" id="PRU00257"/>
    </source>
</evidence>
<comment type="function">
    <text>Transcriptional repressor of the integrated CTXPhi phage gene rstA2.</text>
</comment>
<reference key="1">
    <citation type="journal article" date="1998" name="Proc. Natl. Acad. Sci. U.S.A.">
        <title>CTXphi immunity: application in the development of cholera vaccines.</title>
        <authorList>
            <person name="Kimsey H.H."/>
            <person name="Waldor M.K."/>
        </authorList>
    </citation>
    <scope>NUCLEOTIDE SEQUENCE [GENOMIC DNA]</scope>
    <source>
        <strain>ATCC 25870 / Classical Inaba 569B / Serotype O1</strain>
    </source>
</reference>
<reference key="2">
    <citation type="submission" date="2000-01" db="EMBL/GenBank/DDBJ databases">
        <authorList>
            <person name="Kan B."/>
            <person name="Liu Y.Q."/>
            <person name="Qi G.M."/>
            <person name="Gao S.Y."/>
        </authorList>
    </citation>
    <scope>NUCLEOTIDE SEQUENCE [GENOMIC DNA]</scope>
    <source>
        <strain>El Tor 86015 / Serotype O1</strain>
    </source>
</reference>
<keyword id="KW-0238">DNA-binding</keyword>
<keyword id="KW-0678">Repressor</keyword>
<keyword id="KW-0804">Transcription</keyword>
<keyword id="KW-0805">Transcription regulation</keyword>
<protein>
    <recommendedName>
        <fullName>Cryptic phage CTXphi transcriptional repressor RstR</fullName>
    </recommendedName>
</protein>
<sequence>MFSSKIRDLRVERDLNQEEVANGIGVGKNTYLAYEKGTQSPKLETVEKLAKFYGVPIAELVSDSETNIDEKLKSKIRMIESLDEPEKESLFILMEALLMRSKSREIQKEFR</sequence>
<feature type="chain" id="PRO_0000149736" description="Cryptic phage CTXphi transcriptional repressor RstR">
    <location>
        <begin position="1"/>
        <end position="111"/>
    </location>
</feature>
<feature type="domain" description="HTH cro/C1-type" evidence="1">
    <location>
        <begin position="6"/>
        <end position="60"/>
    </location>
</feature>
<feature type="DNA-binding region" description="H-T-H motif" evidence="1">
    <location>
        <begin position="17"/>
        <end position="36"/>
    </location>
</feature>
<proteinExistence type="predicted"/>
<organism>
    <name type="scientific">Vibrio cholerae</name>
    <dbReference type="NCBI Taxonomy" id="666"/>
    <lineage>
        <taxon>Bacteria</taxon>
        <taxon>Pseudomonadati</taxon>
        <taxon>Pseudomonadota</taxon>
        <taxon>Gammaproteobacteria</taxon>
        <taxon>Vibrionales</taxon>
        <taxon>Vibrionaceae</taxon>
        <taxon>Vibrio</taxon>
    </lineage>
</organism>